<reference key="1">
    <citation type="journal article" date="1999" name="Nature">
        <title>Genomic sequence comparison of two unrelated isolates of the human gastric pathogen Helicobacter pylori.</title>
        <authorList>
            <person name="Alm R.A."/>
            <person name="Ling L.-S.L."/>
            <person name="Moir D.T."/>
            <person name="King B.L."/>
            <person name="Brown E.D."/>
            <person name="Doig P.C."/>
            <person name="Smith D.R."/>
            <person name="Noonan B."/>
            <person name="Guild B.C."/>
            <person name="deJonge B.L."/>
            <person name="Carmel G."/>
            <person name="Tummino P.J."/>
            <person name="Caruso A."/>
            <person name="Uria-Nickelsen M."/>
            <person name="Mills D.M."/>
            <person name="Ives C."/>
            <person name="Gibson R."/>
            <person name="Merberg D."/>
            <person name="Mills S.D."/>
            <person name="Jiang Q."/>
            <person name="Taylor D.E."/>
            <person name="Vovis G.F."/>
            <person name="Trust T.J."/>
        </authorList>
    </citation>
    <scope>NUCLEOTIDE SEQUENCE [LARGE SCALE GENOMIC DNA]</scope>
    <source>
        <strain>J99 / ATCC 700824</strain>
    </source>
</reference>
<accession>P64654</accession>
<accession>O24940</accession>
<keyword id="KW-0732">Signal</keyword>
<organism>
    <name type="scientific">Helicobacter pylori (strain J99 / ATCC 700824)</name>
    <name type="common">Campylobacter pylori J99</name>
    <dbReference type="NCBI Taxonomy" id="85963"/>
    <lineage>
        <taxon>Bacteria</taxon>
        <taxon>Pseudomonadati</taxon>
        <taxon>Campylobacterota</taxon>
        <taxon>Epsilonproteobacteria</taxon>
        <taxon>Campylobacterales</taxon>
        <taxon>Helicobacteraceae</taxon>
        <taxon>Helicobacter</taxon>
    </lineage>
</organism>
<name>Y112_HELPJ</name>
<gene>
    <name type="ordered locus">jhp_0112</name>
</gene>
<evidence type="ECO:0000255" key="1">
    <source>
        <dbReference type="PROSITE-ProRule" id="PRU00303"/>
    </source>
</evidence>
<feature type="signal peptide" evidence="1">
    <location>
        <begin position="1"/>
        <end position="17"/>
    </location>
</feature>
<feature type="chain" id="PRO_0000013979" description="Uncharacterized protein jhp_0112">
    <location>
        <begin position="18"/>
        <end position="43"/>
    </location>
</feature>
<sequence>MYRRLLLNLFCMVFLQACLKPMSDPKAEKVDSQVQCGFGSKDC</sequence>
<protein>
    <recommendedName>
        <fullName>Uncharacterized protein jhp_0112</fullName>
    </recommendedName>
</protein>
<dbReference type="EMBL" id="AE001439">
    <property type="protein sequence ID" value="AAD05691.1"/>
    <property type="molecule type" value="Genomic_DNA"/>
</dbReference>
<dbReference type="KEGG" id="hpj:jhp_0112"/>
<dbReference type="Proteomes" id="UP000000804">
    <property type="component" value="Chromosome"/>
</dbReference>
<dbReference type="PROSITE" id="PS51257">
    <property type="entry name" value="PROKAR_LIPOPROTEIN"/>
    <property type="match status" value="1"/>
</dbReference>
<proteinExistence type="inferred from homology"/>